<name>RS7_VIBCM</name>
<protein>
    <recommendedName>
        <fullName evidence="1">Small ribosomal subunit protein uS7</fullName>
    </recommendedName>
    <alternativeName>
        <fullName evidence="2">30S ribosomal protein S7</fullName>
    </alternativeName>
</protein>
<evidence type="ECO:0000255" key="1">
    <source>
        <dbReference type="HAMAP-Rule" id="MF_00480"/>
    </source>
</evidence>
<evidence type="ECO:0000305" key="2"/>
<sequence length="156" mass="17673">MPRRRVIGQRKILPDPKFKSELLAKFVNILMVDGKKSTAEKIVYTALDTMAEKSGKDHLAVFEEALENVRPAVEVKSRRVGGSTYQVPVEVRPVRRNALAMRWLVEAARKRGEKSMAARLAAEMLDAAENKGSAVKKREDVHRMAEANKAFAHYRW</sequence>
<reference key="1">
    <citation type="journal article" date="2008" name="PLoS ONE">
        <title>A recalibrated molecular clock and independent origins for the cholera pandemic clones.</title>
        <authorList>
            <person name="Feng L."/>
            <person name="Reeves P.R."/>
            <person name="Lan R."/>
            <person name="Ren Y."/>
            <person name="Gao C."/>
            <person name="Zhou Z."/>
            <person name="Ren Y."/>
            <person name="Cheng J."/>
            <person name="Wang W."/>
            <person name="Wang J."/>
            <person name="Qian W."/>
            <person name="Li D."/>
            <person name="Wang L."/>
        </authorList>
    </citation>
    <scope>NUCLEOTIDE SEQUENCE [LARGE SCALE GENOMIC DNA]</scope>
    <source>
        <strain>M66-2</strain>
    </source>
</reference>
<feature type="chain" id="PRO_1000135634" description="Small ribosomal subunit protein uS7">
    <location>
        <begin position="1"/>
        <end position="156"/>
    </location>
</feature>
<keyword id="KW-0687">Ribonucleoprotein</keyword>
<keyword id="KW-0689">Ribosomal protein</keyword>
<keyword id="KW-0694">RNA-binding</keyword>
<keyword id="KW-0699">rRNA-binding</keyword>
<keyword id="KW-0820">tRNA-binding</keyword>
<proteinExistence type="inferred from homology"/>
<dbReference type="EMBL" id="CP001233">
    <property type="protein sequence ID" value="ACP04672.1"/>
    <property type="molecule type" value="Genomic_DNA"/>
</dbReference>
<dbReference type="RefSeq" id="WP_001138050.1">
    <property type="nucleotide sequence ID" value="NC_012578.1"/>
</dbReference>
<dbReference type="SMR" id="C3LR92"/>
<dbReference type="GeneID" id="94014858"/>
<dbReference type="KEGG" id="vcm:VCM66_0344"/>
<dbReference type="HOGENOM" id="CLU_072226_1_1_6"/>
<dbReference type="Proteomes" id="UP000001217">
    <property type="component" value="Chromosome I"/>
</dbReference>
<dbReference type="GO" id="GO:0015935">
    <property type="term" value="C:small ribosomal subunit"/>
    <property type="evidence" value="ECO:0007669"/>
    <property type="project" value="InterPro"/>
</dbReference>
<dbReference type="GO" id="GO:0019843">
    <property type="term" value="F:rRNA binding"/>
    <property type="evidence" value="ECO:0007669"/>
    <property type="project" value="UniProtKB-UniRule"/>
</dbReference>
<dbReference type="GO" id="GO:0003735">
    <property type="term" value="F:structural constituent of ribosome"/>
    <property type="evidence" value="ECO:0007669"/>
    <property type="project" value="InterPro"/>
</dbReference>
<dbReference type="GO" id="GO:0000049">
    <property type="term" value="F:tRNA binding"/>
    <property type="evidence" value="ECO:0007669"/>
    <property type="project" value="UniProtKB-UniRule"/>
</dbReference>
<dbReference type="GO" id="GO:0006412">
    <property type="term" value="P:translation"/>
    <property type="evidence" value="ECO:0007669"/>
    <property type="project" value="UniProtKB-UniRule"/>
</dbReference>
<dbReference type="CDD" id="cd14869">
    <property type="entry name" value="uS7_Bacteria"/>
    <property type="match status" value="1"/>
</dbReference>
<dbReference type="FunFam" id="1.10.455.10:FF:000001">
    <property type="entry name" value="30S ribosomal protein S7"/>
    <property type="match status" value="1"/>
</dbReference>
<dbReference type="Gene3D" id="1.10.455.10">
    <property type="entry name" value="Ribosomal protein S7 domain"/>
    <property type="match status" value="1"/>
</dbReference>
<dbReference type="HAMAP" id="MF_00480_B">
    <property type="entry name" value="Ribosomal_uS7_B"/>
    <property type="match status" value="1"/>
</dbReference>
<dbReference type="InterPro" id="IPR000235">
    <property type="entry name" value="Ribosomal_uS7"/>
</dbReference>
<dbReference type="InterPro" id="IPR005717">
    <property type="entry name" value="Ribosomal_uS7_bac/org-type"/>
</dbReference>
<dbReference type="InterPro" id="IPR020606">
    <property type="entry name" value="Ribosomal_uS7_CS"/>
</dbReference>
<dbReference type="InterPro" id="IPR023798">
    <property type="entry name" value="Ribosomal_uS7_dom"/>
</dbReference>
<dbReference type="InterPro" id="IPR036823">
    <property type="entry name" value="Ribosomal_uS7_dom_sf"/>
</dbReference>
<dbReference type="NCBIfam" id="TIGR01029">
    <property type="entry name" value="rpsG_bact"/>
    <property type="match status" value="1"/>
</dbReference>
<dbReference type="PANTHER" id="PTHR11205">
    <property type="entry name" value="RIBOSOMAL PROTEIN S7"/>
    <property type="match status" value="1"/>
</dbReference>
<dbReference type="Pfam" id="PF00177">
    <property type="entry name" value="Ribosomal_S7"/>
    <property type="match status" value="1"/>
</dbReference>
<dbReference type="PIRSF" id="PIRSF002122">
    <property type="entry name" value="RPS7p_RPS7a_RPS5e_RPS7o"/>
    <property type="match status" value="1"/>
</dbReference>
<dbReference type="SUPFAM" id="SSF47973">
    <property type="entry name" value="Ribosomal protein S7"/>
    <property type="match status" value="1"/>
</dbReference>
<dbReference type="PROSITE" id="PS00052">
    <property type="entry name" value="RIBOSOMAL_S7"/>
    <property type="match status" value="1"/>
</dbReference>
<organism>
    <name type="scientific">Vibrio cholerae serotype O1 (strain M66-2)</name>
    <dbReference type="NCBI Taxonomy" id="579112"/>
    <lineage>
        <taxon>Bacteria</taxon>
        <taxon>Pseudomonadati</taxon>
        <taxon>Pseudomonadota</taxon>
        <taxon>Gammaproteobacteria</taxon>
        <taxon>Vibrionales</taxon>
        <taxon>Vibrionaceae</taxon>
        <taxon>Vibrio</taxon>
    </lineage>
</organism>
<comment type="function">
    <text evidence="1">One of the primary rRNA binding proteins, it binds directly to 16S rRNA where it nucleates assembly of the head domain of the 30S subunit. Is located at the subunit interface close to the decoding center, probably blocks exit of the E-site tRNA.</text>
</comment>
<comment type="subunit">
    <text evidence="1">Part of the 30S ribosomal subunit. Contacts proteins S9 and S11.</text>
</comment>
<comment type="similarity">
    <text evidence="1">Belongs to the universal ribosomal protein uS7 family.</text>
</comment>
<accession>C3LR92</accession>
<gene>
    <name evidence="1" type="primary">rpsG</name>
    <name type="ordered locus">VCM66_0344</name>
</gene>